<name>MURG_OPITP</name>
<proteinExistence type="inferred from homology"/>
<evidence type="ECO:0000255" key="1">
    <source>
        <dbReference type="HAMAP-Rule" id="MF_00033"/>
    </source>
</evidence>
<dbReference type="EC" id="2.4.1.227" evidence="1"/>
<dbReference type="EMBL" id="CP001032">
    <property type="protein sequence ID" value="ACB75917.1"/>
    <property type="molecule type" value="Genomic_DNA"/>
</dbReference>
<dbReference type="RefSeq" id="WP_012375452.1">
    <property type="nucleotide sequence ID" value="NC_010571.1"/>
</dbReference>
<dbReference type="SMR" id="B1ZU31"/>
<dbReference type="STRING" id="452637.Oter_2636"/>
<dbReference type="CAZy" id="GT28">
    <property type="family name" value="Glycosyltransferase Family 28"/>
</dbReference>
<dbReference type="KEGG" id="ote:Oter_2636"/>
<dbReference type="eggNOG" id="COG0707">
    <property type="taxonomic scope" value="Bacteria"/>
</dbReference>
<dbReference type="HOGENOM" id="CLU_037404_2_1_0"/>
<dbReference type="OrthoDB" id="9808936at2"/>
<dbReference type="UniPathway" id="UPA00219"/>
<dbReference type="Proteomes" id="UP000007013">
    <property type="component" value="Chromosome"/>
</dbReference>
<dbReference type="GO" id="GO:0005886">
    <property type="term" value="C:plasma membrane"/>
    <property type="evidence" value="ECO:0007669"/>
    <property type="project" value="UniProtKB-SubCell"/>
</dbReference>
<dbReference type="GO" id="GO:0051991">
    <property type="term" value="F:UDP-N-acetyl-D-glucosamine:N-acetylmuramoyl-L-alanyl-D-glutamyl-meso-2,6-diaminopimelyl-D-alanyl-D-alanine-diphosphoundecaprenol 4-beta-N-acetylglucosaminlytransferase activity"/>
    <property type="evidence" value="ECO:0007669"/>
    <property type="project" value="RHEA"/>
</dbReference>
<dbReference type="GO" id="GO:0050511">
    <property type="term" value="F:undecaprenyldiphospho-muramoylpentapeptide beta-N-acetylglucosaminyltransferase activity"/>
    <property type="evidence" value="ECO:0007669"/>
    <property type="project" value="UniProtKB-UniRule"/>
</dbReference>
<dbReference type="GO" id="GO:0005975">
    <property type="term" value="P:carbohydrate metabolic process"/>
    <property type="evidence" value="ECO:0007669"/>
    <property type="project" value="InterPro"/>
</dbReference>
<dbReference type="GO" id="GO:0051301">
    <property type="term" value="P:cell division"/>
    <property type="evidence" value="ECO:0007669"/>
    <property type="project" value="UniProtKB-KW"/>
</dbReference>
<dbReference type="GO" id="GO:0071555">
    <property type="term" value="P:cell wall organization"/>
    <property type="evidence" value="ECO:0007669"/>
    <property type="project" value="UniProtKB-KW"/>
</dbReference>
<dbReference type="GO" id="GO:0030259">
    <property type="term" value="P:lipid glycosylation"/>
    <property type="evidence" value="ECO:0007669"/>
    <property type="project" value="UniProtKB-UniRule"/>
</dbReference>
<dbReference type="GO" id="GO:0009252">
    <property type="term" value="P:peptidoglycan biosynthetic process"/>
    <property type="evidence" value="ECO:0007669"/>
    <property type="project" value="UniProtKB-UniRule"/>
</dbReference>
<dbReference type="GO" id="GO:0008360">
    <property type="term" value="P:regulation of cell shape"/>
    <property type="evidence" value="ECO:0007669"/>
    <property type="project" value="UniProtKB-KW"/>
</dbReference>
<dbReference type="CDD" id="cd03785">
    <property type="entry name" value="GT28_MurG"/>
    <property type="match status" value="1"/>
</dbReference>
<dbReference type="Gene3D" id="3.40.50.2000">
    <property type="entry name" value="Glycogen Phosphorylase B"/>
    <property type="match status" value="2"/>
</dbReference>
<dbReference type="HAMAP" id="MF_00033">
    <property type="entry name" value="MurG"/>
    <property type="match status" value="1"/>
</dbReference>
<dbReference type="InterPro" id="IPR006009">
    <property type="entry name" value="GlcNAc_MurG"/>
</dbReference>
<dbReference type="InterPro" id="IPR007235">
    <property type="entry name" value="Glyco_trans_28_C"/>
</dbReference>
<dbReference type="InterPro" id="IPR004276">
    <property type="entry name" value="GlycoTrans_28_N"/>
</dbReference>
<dbReference type="PANTHER" id="PTHR21015:SF22">
    <property type="entry name" value="GLYCOSYLTRANSFERASE"/>
    <property type="match status" value="1"/>
</dbReference>
<dbReference type="PANTHER" id="PTHR21015">
    <property type="entry name" value="UDP-N-ACETYLGLUCOSAMINE--N-ACETYLMURAMYL-(PENTAPEPTIDE) PYROPHOSPHORYL-UNDECAPRENOL N-ACETYLGLUCOSAMINE TRANSFERASE 1"/>
    <property type="match status" value="1"/>
</dbReference>
<dbReference type="Pfam" id="PF04101">
    <property type="entry name" value="Glyco_tran_28_C"/>
    <property type="match status" value="1"/>
</dbReference>
<dbReference type="Pfam" id="PF03033">
    <property type="entry name" value="Glyco_transf_28"/>
    <property type="match status" value="1"/>
</dbReference>
<dbReference type="SUPFAM" id="SSF53756">
    <property type="entry name" value="UDP-Glycosyltransferase/glycogen phosphorylase"/>
    <property type="match status" value="1"/>
</dbReference>
<comment type="function">
    <text evidence="1">Cell wall formation. Catalyzes the transfer of a GlcNAc subunit on undecaprenyl-pyrophosphoryl-MurNAc-pentapeptide (lipid intermediate I) to form undecaprenyl-pyrophosphoryl-MurNAc-(pentapeptide)GlcNAc (lipid intermediate II).</text>
</comment>
<comment type="catalytic activity">
    <reaction evidence="1">
        <text>di-trans,octa-cis-undecaprenyl diphospho-N-acetyl-alpha-D-muramoyl-L-alanyl-D-glutamyl-meso-2,6-diaminopimeloyl-D-alanyl-D-alanine + UDP-N-acetyl-alpha-D-glucosamine = di-trans,octa-cis-undecaprenyl diphospho-[N-acetyl-alpha-D-glucosaminyl-(1-&gt;4)]-N-acetyl-alpha-D-muramoyl-L-alanyl-D-glutamyl-meso-2,6-diaminopimeloyl-D-alanyl-D-alanine + UDP + H(+)</text>
        <dbReference type="Rhea" id="RHEA:31227"/>
        <dbReference type="ChEBI" id="CHEBI:15378"/>
        <dbReference type="ChEBI" id="CHEBI:57705"/>
        <dbReference type="ChEBI" id="CHEBI:58223"/>
        <dbReference type="ChEBI" id="CHEBI:61387"/>
        <dbReference type="ChEBI" id="CHEBI:61388"/>
        <dbReference type="EC" id="2.4.1.227"/>
    </reaction>
</comment>
<comment type="pathway">
    <text evidence="1">Cell wall biogenesis; peptidoglycan biosynthesis.</text>
</comment>
<comment type="subcellular location">
    <subcellularLocation>
        <location evidence="1">Cell inner membrane</location>
        <topology evidence="1">Peripheral membrane protein</topology>
        <orientation evidence="1">Cytoplasmic side</orientation>
    </subcellularLocation>
</comment>
<comment type="similarity">
    <text evidence="1">Belongs to the glycosyltransferase 28 family. MurG subfamily.</text>
</comment>
<accession>B1ZU31</accession>
<sequence>MSTFLISCGGTGGHLSPGIALAEGLQARGHSVRLLISHKKVDARLIAKYPRLDFTRVPGTGFSLHPVRLARFIGTQSRGLWFCRGLVRAARPAGVVAFGGFTSAGVVLAARWRGVPVALHEANRVPGRAIRVLSRFANRVYLPPGVRLASAPPGAVRPMGLPVRQEIRRVSQTDARARFGFAVGQKLLVVFGGSQGATVLNDWVRREMPALAAEGVQVCCVTGLGKGSDETVELRTHAGQPVRIQFLTFCDCVPELLSAADLVLSRAGAGTIAELVRCETPAILVPFPQAADDHQRANAAFFERQGGGVVVEQTMMHSVRAEVLDVIFDEELLRKFRGNLQRMDRANSLELMLNDLEEMTRTHGASGSPGTATAVVT</sequence>
<feature type="chain" id="PRO_1000090455" description="UDP-N-acetylglucosamine--N-acetylmuramyl-(pentapeptide) pyrophosphoryl-undecaprenol N-acetylglucosamine transferase">
    <location>
        <begin position="1"/>
        <end position="377"/>
    </location>
</feature>
<feature type="binding site" evidence="1">
    <location>
        <begin position="11"/>
        <end position="13"/>
    </location>
    <ligand>
        <name>UDP-N-acetyl-alpha-D-glucosamine</name>
        <dbReference type="ChEBI" id="CHEBI:57705"/>
    </ligand>
</feature>
<feature type="binding site" evidence="1">
    <location>
        <position position="123"/>
    </location>
    <ligand>
        <name>UDP-N-acetyl-alpha-D-glucosamine</name>
        <dbReference type="ChEBI" id="CHEBI:57705"/>
    </ligand>
</feature>
<feature type="binding site" evidence="1">
    <location>
        <position position="164"/>
    </location>
    <ligand>
        <name>UDP-N-acetyl-alpha-D-glucosamine</name>
        <dbReference type="ChEBI" id="CHEBI:57705"/>
    </ligand>
</feature>
<feature type="binding site" evidence="1">
    <location>
        <position position="194"/>
    </location>
    <ligand>
        <name>UDP-N-acetyl-alpha-D-glucosamine</name>
        <dbReference type="ChEBI" id="CHEBI:57705"/>
    </ligand>
</feature>
<feature type="binding site" evidence="1">
    <location>
        <position position="295"/>
    </location>
    <ligand>
        <name>UDP-N-acetyl-alpha-D-glucosamine</name>
        <dbReference type="ChEBI" id="CHEBI:57705"/>
    </ligand>
</feature>
<protein>
    <recommendedName>
        <fullName evidence="1">UDP-N-acetylglucosamine--N-acetylmuramyl-(pentapeptide) pyrophosphoryl-undecaprenol N-acetylglucosamine transferase</fullName>
        <ecNumber evidence="1">2.4.1.227</ecNumber>
    </recommendedName>
    <alternativeName>
        <fullName evidence="1">Undecaprenyl-PP-MurNAc-pentapeptide-UDPGlcNAc GlcNAc transferase</fullName>
    </alternativeName>
</protein>
<gene>
    <name evidence="1" type="primary">murG</name>
    <name type="ordered locus">Oter_2636</name>
</gene>
<keyword id="KW-0131">Cell cycle</keyword>
<keyword id="KW-0132">Cell division</keyword>
<keyword id="KW-0997">Cell inner membrane</keyword>
<keyword id="KW-1003">Cell membrane</keyword>
<keyword id="KW-0133">Cell shape</keyword>
<keyword id="KW-0961">Cell wall biogenesis/degradation</keyword>
<keyword id="KW-0328">Glycosyltransferase</keyword>
<keyword id="KW-0472">Membrane</keyword>
<keyword id="KW-0573">Peptidoglycan synthesis</keyword>
<keyword id="KW-1185">Reference proteome</keyword>
<keyword id="KW-0808">Transferase</keyword>
<reference key="1">
    <citation type="journal article" date="2011" name="J. Bacteriol.">
        <title>Genome sequence of the verrucomicrobium Opitutus terrae PB90-1, an abundant inhabitant of rice paddy soil ecosystems.</title>
        <authorList>
            <person name="van Passel M.W."/>
            <person name="Kant R."/>
            <person name="Palva A."/>
            <person name="Copeland A."/>
            <person name="Lucas S."/>
            <person name="Lapidus A."/>
            <person name="Glavina del Rio T."/>
            <person name="Pitluck S."/>
            <person name="Goltsman E."/>
            <person name="Clum A."/>
            <person name="Sun H."/>
            <person name="Schmutz J."/>
            <person name="Larimer F.W."/>
            <person name="Land M.L."/>
            <person name="Hauser L."/>
            <person name="Kyrpides N."/>
            <person name="Mikhailova N."/>
            <person name="Richardson P.P."/>
            <person name="Janssen P.H."/>
            <person name="de Vos W.M."/>
            <person name="Smidt H."/>
        </authorList>
    </citation>
    <scope>NUCLEOTIDE SEQUENCE [LARGE SCALE GENOMIC DNA]</scope>
    <source>
        <strain>DSM 11246 / JCM 15787 / PB90-1</strain>
    </source>
</reference>
<organism>
    <name type="scientific">Opitutus terrae (strain DSM 11246 / JCM 15787 / PB90-1)</name>
    <dbReference type="NCBI Taxonomy" id="452637"/>
    <lineage>
        <taxon>Bacteria</taxon>
        <taxon>Pseudomonadati</taxon>
        <taxon>Verrucomicrobiota</taxon>
        <taxon>Opitutia</taxon>
        <taxon>Opitutales</taxon>
        <taxon>Opitutaceae</taxon>
        <taxon>Opitutus</taxon>
    </lineage>
</organism>